<reference key="1">
    <citation type="journal article" date="2006" name="Proc. Natl. Acad. Sci. U.S.A.">
        <title>Burkholderia xenovorans LB400 harbors a multi-replicon, 9.73-Mbp genome shaped for versatility.</title>
        <authorList>
            <person name="Chain P.S.G."/>
            <person name="Denef V.J."/>
            <person name="Konstantinidis K.T."/>
            <person name="Vergez L.M."/>
            <person name="Agullo L."/>
            <person name="Reyes V.L."/>
            <person name="Hauser L."/>
            <person name="Cordova M."/>
            <person name="Gomez L."/>
            <person name="Gonzalez M."/>
            <person name="Land M."/>
            <person name="Lao V."/>
            <person name="Larimer F."/>
            <person name="LiPuma J.J."/>
            <person name="Mahenthiralingam E."/>
            <person name="Malfatti S.A."/>
            <person name="Marx C.J."/>
            <person name="Parnell J.J."/>
            <person name="Ramette A."/>
            <person name="Richardson P."/>
            <person name="Seeger M."/>
            <person name="Smith D."/>
            <person name="Spilker T."/>
            <person name="Sul W.J."/>
            <person name="Tsoi T.V."/>
            <person name="Ulrich L.E."/>
            <person name="Zhulin I.B."/>
            <person name="Tiedje J.M."/>
        </authorList>
    </citation>
    <scope>NUCLEOTIDE SEQUENCE [LARGE SCALE GENOMIC DNA]</scope>
    <source>
        <strain>LB400</strain>
    </source>
</reference>
<gene>
    <name evidence="1" type="primary">rpsF</name>
    <name type="ordered locus">Bxeno_A1979</name>
    <name type="ORF">Bxe_A2456</name>
</gene>
<evidence type="ECO:0000255" key="1">
    <source>
        <dbReference type="HAMAP-Rule" id="MF_00360"/>
    </source>
</evidence>
<evidence type="ECO:0000256" key="2">
    <source>
        <dbReference type="SAM" id="MobiDB-lite"/>
    </source>
</evidence>
<evidence type="ECO:0000305" key="3"/>
<sequence>MRHYEIVFIVHPDQSEQVPAMIERYKSTITSHGGQIHRIEDWGRRQLAYMIEKLAKAHYVCMNIECDQTTLDELEHAFKFNDAVLRHLIVKMKKAETGPSPMMKEVQREEAKKSAATQPSEAQA</sequence>
<dbReference type="EMBL" id="CP000270">
    <property type="protein sequence ID" value="ABE30517.1"/>
    <property type="molecule type" value="Genomic_DNA"/>
</dbReference>
<dbReference type="RefSeq" id="WP_006048823.1">
    <property type="nucleotide sequence ID" value="NZ_CP008760.1"/>
</dbReference>
<dbReference type="SMR" id="Q13ZH2"/>
<dbReference type="STRING" id="266265.Bxe_A2456"/>
<dbReference type="GeneID" id="97305421"/>
<dbReference type="KEGG" id="bxb:DR64_148"/>
<dbReference type="KEGG" id="bxe:Bxe_A2456"/>
<dbReference type="eggNOG" id="COG0360">
    <property type="taxonomic scope" value="Bacteria"/>
</dbReference>
<dbReference type="OrthoDB" id="9812702at2"/>
<dbReference type="Proteomes" id="UP000001817">
    <property type="component" value="Chromosome 1"/>
</dbReference>
<dbReference type="GO" id="GO:0022627">
    <property type="term" value="C:cytosolic small ribosomal subunit"/>
    <property type="evidence" value="ECO:0007669"/>
    <property type="project" value="TreeGrafter"/>
</dbReference>
<dbReference type="GO" id="GO:0070181">
    <property type="term" value="F:small ribosomal subunit rRNA binding"/>
    <property type="evidence" value="ECO:0007669"/>
    <property type="project" value="TreeGrafter"/>
</dbReference>
<dbReference type="GO" id="GO:0003735">
    <property type="term" value="F:structural constituent of ribosome"/>
    <property type="evidence" value="ECO:0007669"/>
    <property type="project" value="InterPro"/>
</dbReference>
<dbReference type="GO" id="GO:0006412">
    <property type="term" value="P:translation"/>
    <property type="evidence" value="ECO:0007669"/>
    <property type="project" value="UniProtKB-UniRule"/>
</dbReference>
<dbReference type="CDD" id="cd00473">
    <property type="entry name" value="bS6"/>
    <property type="match status" value="1"/>
</dbReference>
<dbReference type="Gene3D" id="3.30.70.60">
    <property type="match status" value="1"/>
</dbReference>
<dbReference type="HAMAP" id="MF_00360">
    <property type="entry name" value="Ribosomal_bS6"/>
    <property type="match status" value="1"/>
</dbReference>
<dbReference type="InterPro" id="IPR000529">
    <property type="entry name" value="Ribosomal_bS6"/>
</dbReference>
<dbReference type="InterPro" id="IPR035980">
    <property type="entry name" value="Ribosomal_bS6_sf"/>
</dbReference>
<dbReference type="InterPro" id="IPR020814">
    <property type="entry name" value="Ribosomal_S6_plastid/chlpt"/>
</dbReference>
<dbReference type="InterPro" id="IPR014717">
    <property type="entry name" value="Transl_elong_EF1B/ribsomal_bS6"/>
</dbReference>
<dbReference type="NCBIfam" id="TIGR00166">
    <property type="entry name" value="S6"/>
    <property type="match status" value="1"/>
</dbReference>
<dbReference type="PANTHER" id="PTHR21011">
    <property type="entry name" value="MITOCHONDRIAL 28S RIBOSOMAL PROTEIN S6"/>
    <property type="match status" value="1"/>
</dbReference>
<dbReference type="PANTHER" id="PTHR21011:SF1">
    <property type="entry name" value="SMALL RIBOSOMAL SUBUNIT PROTEIN BS6M"/>
    <property type="match status" value="1"/>
</dbReference>
<dbReference type="Pfam" id="PF01250">
    <property type="entry name" value="Ribosomal_S6"/>
    <property type="match status" value="1"/>
</dbReference>
<dbReference type="SUPFAM" id="SSF54995">
    <property type="entry name" value="Ribosomal protein S6"/>
    <property type="match status" value="1"/>
</dbReference>
<feature type="chain" id="PRO_1000005236" description="Small ribosomal subunit protein bS6">
    <location>
        <begin position="1"/>
        <end position="124"/>
    </location>
</feature>
<feature type="region of interest" description="Disordered" evidence="2">
    <location>
        <begin position="96"/>
        <end position="124"/>
    </location>
</feature>
<feature type="compositionally biased region" description="Polar residues" evidence="2">
    <location>
        <begin position="115"/>
        <end position="124"/>
    </location>
</feature>
<accession>Q13ZH2</accession>
<name>RS6_PARXL</name>
<comment type="function">
    <text evidence="1">Binds together with bS18 to 16S ribosomal RNA.</text>
</comment>
<comment type="similarity">
    <text evidence="1">Belongs to the bacterial ribosomal protein bS6 family.</text>
</comment>
<organism>
    <name type="scientific">Paraburkholderia xenovorans (strain LB400)</name>
    <dbReference type="NCBI Taxonomy" id="266265"/>
    <lineage>
        <taxon>Bacteria</taxon>
        <taxon>Pseudomonadati</taxon>
        <taxon>Pseudomonadota</taxon>
        <taxon>Betaproteobacteria</taxon>
        <taxon>Burkholderiales</taxon>
        <taxon>Burkholderiaceae</taxon>
        <taxon>Paraburkholderia</taxon>
    </lineage>
</organism>
<protein>
    <recommendedName>
        <fullName evidence="1">Small ribosomal subunit protein bS6</fullName>
    </recommendedName>
    <alternativeName>
        <fullName evidence="3">30S ribosomal protein S6</fullName>
    </alternativeName>
</protein>
<proteinExistence type="inferred from homology"/>
<keyword id="KW-1185">Reference proteome</keyword>
<keyword id="KW-0687">Ribonucleoprotein</keyword>
<keyword id="KW-0689">Ribosomal protein</keyword>
<keyword id="KW-0694">RNA-binding</keyword>
<keyword id="KW-0699">rRNA-binding</keyword>